<name>GOT1B_BOVIN</name>
<evidence type="ECO:0000250" key="1"/>
<evidence type="ECO:0000250" key="2">
    <source>
        <dbReference type="UniProtKB" id="Q9Y3E0"/>
    </source>
</evidence>
<evidence type="ECO:0000255" key="3"/>
<evidence type="ECO:0000312" key="4">
    <source>
        <dbReference type="EMBL" id="AAI10262.1"/>
    </source>
</evidence>
<comment type="function">
    <text evidence="2">May be involved in fusion of ER-derived transport vesicles with the Golgi complex.</text>
</comment>
<comment type="subcellular location">
    <subcellularLocation>
        <location evidence="1">Golgi apparatus membrane</location>
        <topology evidence="1">Multi-pass membrane protein</topology>
    </subcellularLocation>
</comment>
<comment type="similarity">
    <text evidence="3">Belongs to the GOT1 family.</text>
</comment>
<protein>
    <recommendedName>
        <fullName>Vesicle transport protein GOT1B</fullName>
    </recommendedName>
    <alternativeName>
        <fullName>Golgi transport 1 homolog B</fullName>
    </alternativeName>
</protein>
<dbReference type="EMBL" id="BC110261">
    <property type="protein sequence ID" value="AAI10262.1"/>
    <property type="molecule type" value="mRNA"/>
</dbReference>
<dbReference type="RefSeq" id="NP_001039680.1">
    <property type="nucleotide sequence ID" value="NM_001046215.2"/>
</dbReference>
<dbReference type="FunCoup" id="Q2YDE3">
    <property type="interactions" value="3118"/>
</dbReference>
<dbReference type="STRING" id="9913.ENSBTAP00000056834"/>
<dbReference type="PaxDb" id="9913-ENSBTAP00000000490"/>
<dbReference type="Ensembl" id="ENSBTAT00000000490.6">
    <property type="protein sequence ID" value="ENSBTAP00000000490.4"/>
    <property type="gene ID" value="ENSBTAG00000000379.6"/>
</dbReference>
<dbReference type="GeneID" id="515866"/>
<dbReference type="KEGG" id="bta:515866"/>
<dbReference type="CTD" id="51026"/>
<dbReference type="VEuPathDB" id="HostDB:ENSBTAG00000000379"/>
<dbReference type="VGNC" id="VGNC:29495">
    <property type="gene designation" value="GOLT1B"/>
</dbReference>
<dbReference type="eggNOG" id="KOG1743">
    <property type="taxonomic scope" value="Eukaryota"/>
</dbReference>
<dbReference type="GeneTree" id="ENSGT00390000014507"/>
<dbReference type="HOGENOM" id="CLU_124519_1_0_1"/>
<dbReference type="InParanoid" id="Q2YDE3"/>
<dbReference type="OMA" id="MWLTDAQ"/>
<dbReference type="OrthoDB" id="204784at2759"/>
<dbReference type="TreeFam" id="TF300267"/>
<dbReference type="Proteomes" id="UP000009136">
    <property type="component" value="Chromosome 5"/>
</dbReference>
<dbReference type="Bgee" id="ENSBTAG00000000379">
    <property type="expression patterns" value="Expressed in oocyte and 105 other cell types or tissues"/>
</dbReference>
<dbReference type="GO" id="GO:0005829">
    <property type="term" value="C:cytosol"/>
    <property type="evidence" value="ECO:0007669"/>
    <property type="project" value="GOC"/>
</dbReference>
<dbReference type="GO" id="GO:0005783">
    <property type="term" value="C:endoplasmic reticulum"/>
    <property type="evidence" value="ECO:0000318"/>
    <property type="project" value="GO_Central"/>
</dbReference>
<dbReference type="GO" id="GO:0000139">
    <property type="term" value="C:Golgi membrane"/>
    <property type="evidence" value="ECO:0007669"/>
    <property type="project" value="UniProtKB-SubCell"/>
</dbReference>
<dbReference type="GO" id="GO:0016020">
    <property type="term" value="C:membrane"/>
    <property type="evidence" value="ECO:0000318"/>
    <property type="project" value="GO_Central"/>
</dbReference>
<dbReference type="GO" id="GO:0006888">
    <property type="term" value="P:endoplasmic reticulum to Golgi vesicle-mediated transport"/>
    <property type="evidence" value="ECO:0007669"/>
    <property type="project" value="InterPro"/>
</dbReference>
<dbReference type="GO" id="GO:0015031">
    <property type="term" value="P:protein transport"/>
    <property type="evidence" value="ECO:0007669"/>
    <property type="project" value="UniProtKB-KW"/>
</dbReference>
<dbReference type="GO" id="GO:0042147">
    <property type="term" value="P:retrograde transport, endosome to Golgi"/>
    <property type="evidence" value="ECO:0007669"/>
    <property type="project" value="InterPro"/>
</dbReference>
<dbReference type="InterPro" id="IPR045176">
    <property type="entry name" value="Got1"/>
</dbReference>
<dbReference type="InterPro" id="IPR007305">
    <property type="entry name" value="Vesicle_transpt_Got1/SFT2"/>
</dbReference>
<dbReference type="PANTHER" id="PTHR21493">
    <property type="entry name" value="CGI-141-RELATED/LIPASE CONTAINING PROTEIN"/>
    <property type="match status" value="1"/>
</dbReference>
<dbReference type="PANTHER" id="PTHR21493:SF79">
    <property type="entry name" value="VESICLE TRANSPORT PROTEIN GOT1B"/>
    <property type="match status" value="1"/>
</dbReference>
<dbReference type="Pfam" id="PF04178">
    <property type="entry name" value="Got1"/>
    <property type="match status" value="1"/>
</dbReference>
<keyword id="KW-0007">Acetylation</keyword>
<keyword id="KW-0333">Golgi apparatus</keyword>
<keyword id="KW-0472">Membrane</keyword>
<keyword id="KW-0653">Protein transport</keyword>
<keyword id="KW-1185">Reference proteome</keyword>
<keyword id="KW-0812">Transmembrane</keyword>
<keyword id="KW-1133">Transmembrane helix</keyword>
<keyword id="KW-0813">Transport</keyword>
<reference evidence="4" key="1">
    <citation type="submission" date="2005-11" db="EMBL/GenBank/DDBJ databases">
        <authorList>
            <consortium name="NIH - Mammalian Gene Collection (MGC) project"/>
        </authorList>
    </citation>
    <scope>NUCLEOTIDE SEQUENCE [LARGE SCALE MRNA]</scope>
    <source>
        <strain evidence="4">Crossbred X Angus</strain>
        <tissue evidence="4">Liver</tissue>
    </source>
</reference>
<proteinExistence type="evidence at transcript level"/>
<organism>
    <name type="scientific">Bos taurus</name>
    <name type="common">Bovine</name>
    <dbReference type="NCBI Taxonomy" id="9913"/>
    <lineage>
        <taxon>Eukaryota</taxon>
        <taxon>Metazoa</taxon>
        <taxon>Chordata</taxon>
        <taxon>Craniata</taxon>
        <taxon>Vertebrata</taxon>
        <taxon>Euteleostomi</taxon>
        <taxon>Mammalia</taxon>
        <taxon>Eutheria</taxon>
        <taxon>Laurasiatheria</taxon>
        <taxon>Artiodactyla</taxon>
        <taxon>Ruminantia</taxon>
        <taxon>Pecora</taxon>
        <taxon>Bovidae</taxon>
        <taxon>Bovinae</taxon>
        <taxon>Bos</taxon>
    </lineage>
</organism>
<feature type="chain" id="PRO_0000237609" description="Vesicle transport protein GOT1B">
    <location>
        <begin position="1"/>
        <end position="138"/>
    </location>
</feature>
<feature type="topological domain" description="Cytoplasmic" evidence="3">
    <location>
        <begin position="1"/>
        <end position="9"/>
    </location>
</feature>
<feature type="transmembrane region" description="Helical; Name=1" evidence="3">
    <location>
        <begin position="10"/>
        <end position="30"/>
    </location>
</feature>
<feature type="topological domain" description="Lumenal" evidence="3">
    <location>
        <begin position="31"/>
        <end position="32"/>
    </location>
</feature>
<feature type="transmembrane region" description="Helical; Name=2" evidence="3">
    <location>
        <begin position="33"/>
        <end position="53"/>
    </location>
</feature>
<feature type="topological domain" description="Cytoplasmic" evidence="3">
    <location>
        <begin position="54"/>
        <end position="68"/>
    </location>
</feature>
<feature type="transmembrane region" description="Helical; Name=3" evidence="3">
    <location>
        <begin position="69"/>
        <end position="89"/>
    </location>
</feature>
<feature type="topological domain" description="Lumenal" evidence="3">
    <location>
        <position position="90"/>
    </location>
</feature>
<feature type="transmembrane region" description="Helical; Name=4" evidence="3">
    <location>
        <begin position="91"/>
        <end position="109"/>
    </location>
</feature>
<feature type="topological domain" description="Cytoplasmic" evidence="3">
    <location>
        <begin position="110"/>
        <end position="138"/>
    </location>
</feature>
<feature type="modified residue" description="N-acetylmethionine" evidence="2">
    <location>
        <position position="1"/>
    </location>
</feature>
<accession>Q2YDE3</accession>
<sequence length="138" mass="15426">MISLTDTQKIGMGLTGFGVFFLFFGMILFFDKALLAIGNVLFVAGLAFVIGLERTFRFFFQKHKMKATGFFLGGVFVVLIGWPLIGMIFEIYGFFLLFRGFFPVVVGFIRRVPVLGSLLNLPGIRSFVDKVGESNNMV</sequence>
<gene>
    <name evidence="2" type="primary">GOLT1B</name>
</gene>